<protein>
    <recommendedName>
        <fullName evidence="1">UPF0298 protein SA0970</fullName>
    </recommendedName>
</protein>
<reference key="1">
    <citation type="journal article" date="2001" name="Lancet">
        <title>Whole genome sequencing of meticillin-resistant Staphylococcus aureus.</title>
        <authorList>
            <person name="Kuroda M."/>
            <person name="Ohta T."/>
            <person name="Uchiyama I."/>
            <person name="Baba T."/>
            <person name="Yuzawa H."/>
            <person name="Kobayashi I."/>
            <person name="Cui L."/>
            <person name="Oguchi A."/>
            <person name="Aoki K."/>
            <person name="Nagai Y."/>
            <person name="Lian J.-Q."/>
            <person name="Ito T."/>
            <person name="Kanamori M."/>
            <person name="Matsumaru H."/>
            <person name="Maruyama A."/>
            <person name="Murakami H."/>
            <person name="Hosoyama A."/>
            <person name="Mizutani-Ui Y."/>
            <person name="Takahashi N.K."/>
            <person name="Sawano T."/>
            <person name="Inoue R."/>
            <person name="Kaito C."/>
            <person name="Sekimizu K."/>
            <person name="Hirakawa H."/>
            <person name="Kuhara S."/>
            <person name="Goto S."/>
            <person name="Yabuzaki J."/>
            <person name="Kanehisa M."/>
            <person name="Yamashita A."/>
            <person name="Oshima K."/>
            <person name="Furuya K."/>
            <person name="Yoshino C."/>
            <person name="Shiba T."/>
            <person name="Hattori M."/>
            <person name="Ogasawara N."/>
            <person name="Hayashi H."/>
            <person name="Hiramatsu K."/>
        </authorList>
    </citation>
    <scope>NUCLEOTIDE SEQUENCE [LARGE SCALE GENOMIC DNA]</scope>
    <source>
        <strain>N315</strain>
    </source>
</reference>
<comment type="subcellular location">
    <subcellularLocation>
        <location evidence="1">Cytoplasm</location>
    </subcellularLocation>
</comment>
<comment type="similarity">
    <text evidence="1">Belongs to the UPF0298 family.</text>
</comment>
<name>Y970_STAAN</name>
<gene>
    <name type="ordered locus">SA0970</name>
</gene>
<proteinExistence type="inferred from homology"/>
<sequence length="84" mass="10413">MNLIPRTSIVVYLKHMKHERQIRKYGHIVHSNRDRKFVIMYVNEQDVDQIVHKLMQLKYVRHIDGSPYKYLKKTYEKEKHEIYN</sequence>
<evidence type="ECO:0000255" key="1">
    <source>
        <dbReference type="HAMAP-Rule" id="MF_01126"/>
    </source>
</evidence>
<feature type="chain" id="PRO_0000074670" description="UPF0298 protein SA0970">
    <location>
        <begin position="1"/>
        <end position="84"/>
    </location>
</feature>
<keyword id="KW-0963">Cytoplasm</keyword>
<organism>
    <name type="scientific">Staphylococcus aureus (strain N315)</name>
    <dbReference type="NCBI Taxonomy" id="158879"/>
    <lineage>
        <taxon>Bacteria</taxon>
        <taxon>Bacillati</taxon>
        <taxon>Bacillota</taxon>
        <taxon>Bacilli</taxon>
        <taxon>Bacillales</taxon>
        <taxon>Staphylococcaceae</taxon>
        <taxon>Staphylococcus</taxon>
    </lineage>
</organism>
<accession>P60417</accession>
<accession>Q99UY2</accession>
<dbReference type="EMBL" id="BA000018">
    <property type="protein sequence ID" value="BAB42218.1"/>
    <property type="molecule type" value="Genomic_DNA"/>
</dbReference>
<dbReference type="PIR" id="F89882">
    <property type="entry name" value="F89882"/>
</dbReference>
<dbReference type="RefSeq" id="WP_001049150.1">
    <property type="nucleotide sequence ID" value="NC_002745.2"/>
</dbReference>
<dbReference type="SMR" id="P60417"/>
<dbReference type="EnsemblBacteria" id="BAB42218">
    <property type="protein sequence ID" value="BAB42218"/>
    <property type="gene ID" value="BAB42218"/>
</dbReference>
<dbReference type="KEGG" id="sau:SA0970"/>
<dbReference type="HOGENOM" id="CLU_159890_2_1_9"/>
<dbReference type="GO" id="GO:0005737">
    <property type="term" value="C:cytoplasm"/>
    <property type="evidence" value="ECO:0007669"/>
    <property type="project" value="UniProtKB-SubCell"/>
</dbReference>
<dbReference type="HAMAP" id="MF_01126">
    <property type="entry name" value="UPF0298"/>
    <property type="match status" value="1"/>
</dbReference>
<dbReference type="InterPro" id="IPR016979">
    <property type="entry name" value="DUF2129"/>
</dbReference>
<dbReference type="Pfam" id="PF09902">
    <property type="entry name" value="DUF2129"/>
    <property type="match status" value="1"/>
</dbReference>
<dbReference type="PIRSF" id="PIRSF031653">
    <property type="entry name" value="UCP031653"/>
    <property type="match status" value="1"/>
</dbReference>